<evidence type="ECO:0000255" key="1">
    <source>
        <dbReference type="HAMAP-Rule" id="MF_01422"/>
    </source>
</evidence>
<evidence type="ECO:0000256" key="2">
    <source>
        <dbReference type="SAM" id="MobiDB-lite"/>
    </source>
</evidence>
<protein>
    <recommendedName>
        <fullName evidence="1">Multidrug resistance protein MdtA</fullName>
    </recommendedName>
    <alternativeName>
        <fullName evidence="1">Multidrug transporter MdtA</fullName>
    </alternativeName>
</protein>
<dbReference type="EMBL" id="CU928162">
    <property type="protein sequence ID" value="CAR08603.2"/>
    <property type="molecule type" value="Genomic_DNA"/>
</dbReference>
<dbReference type="RefSeq" id="WP_000679014.1">
    <property type="nucleotide sequence ID" value="NC_011745.1"/>
</dbReference>
<dbReference type="SMR" id="B7MWY7"/>
<dbReference type="KEGG" id="ecq:ECED1_2420"/>
<dbReference type="HOGENOM" id="CLU_018816_2_0_6"/>
<dbReference type="Proteomes" id="UP000000748">
    <property type="component" value="Chromosome"/>
</dbReference>
<dbReference type="GO" id="GO:1990281">
    <property type="term" value="C:efflux pump complex"/>
    <property type="evidence" value="ECO:0007669"/>
    <property type="project" value="TreeGrafter"/>
</dbReference>
<dbReference type="GO" id="GO:0005886">
    <property type="term" value="C:plasma membrane"/>
    <property type="evidence" value="ECO:0007669"/>
    <property type="project" value="UniProtKB-SubCell"/>
</dbReference>
<dbReference type="GO" id="GO:0015562">
    <property type="term" value="F:efflux transmembrane transporter activity"/>
    <property type="evidence" value="ECO:0007669"/>
    <property type="project" value="TreeGrafter"/>
</dbReference>
<dbReference type="FunFam" id="2.40.420.20:FF:000001">
    <property type="entry name" value="Efflux RND transporter periplasmic adaptor subunit"/>
    <property type="match status" value="1"/>
</dbReference>
<dbReference type="FunFam" id="1.10.287.470:FF:000005">
    <property type="entry name" value="Multidrug resistance protein MdtA"/>
    <property type="match status" value="1"/>
</dbReference>
<dbReference type="FunFam" id="2.40.30.170:FF:000006">
    <property type="entry name" value="Multidrug resistance protein MdtA"/>
    <property type="match status" value="1"/>
</dbReference>
<dbReference type="Gene3D" id="2.40.30.170">
    <property type="match status" value="1"/>
</dbReference>
<dbReference type="Gene3D" id="2.40.420.20">
    <property type="match status" value="1"/>
</dbReference>
<dbReference type="Gene3D" id="2.40.50.100">
    <property type="match status" value="1"/>
</dbReference>
<dbReference type="Gene3D" id="1.10.287.470">
    <property type="entry name" value="Helix hairpin bin"/>
    <property type="match status" value="1"/>
</dbReference>
<dbReference type="HAMAP" id="MF_01422">
    <property type="entry name" value="MdtA"/>
    <property type="match status" value="1"/>
</dbReference>
<dbReference type="InterPro" id="IPR032317">
    <property type="entry name" value="CusB_D23"/>
</dbReference>
<dbReference type="InterPro" id="IPR022824">
    <property type="entry name" value="Multidrug-R_MdtA"/>
</dbReference>
<dbReference type="InterPro" id="IPR006143">
    <property type="entry name" value="RND_pump_MFP"/>
</dbReference>
<dbReference type="NCBIfam" id="NF008589">
    <property type="entry name" value="PRK11556.1"/>
    <property type="match status" value="1"/>
</dbReference>
<dbReference type="NCBIfam" id="TIGR01730">
    <property type="entry name" value="RND_mfp"/>
    <property type="match status" value="1"/>
</dbReference>
<dbReference type="PANTHER" id="PTHR30469">
    <property type="entry name" value="MULTIDRUG RESISTANCE PROTEIN MDTA"/>
    <property type="match status" value="1"/>
</dbReference>
<dbReference type="PANTHER" id="PTHR30469:SF12">
    <property type="entry name" value="MULTIDRUG RESISTANCE PROTEIN MDTA"/>
    <property type="match status" value="1"/>
</dbReference>
<dbReference type="Pfam" id="PF16576">
    <property type="entry name" value="HlyD_D23"/>
    <property type="match status" value="1"/>
</dbReference>
<dbReference type="SUPFAM" id="SSF111369">
    <property type="entry name" value="HlyD-like secretion proteins"/>
    <property type="match status" value="1"/>
</dbReference>
<name>MDTA_ECO81</name>
<keyword id="KW-0997">Cell inner membrane</keyword>
<keyword id="KW-1003">Cell membrane</keyword>
<keyword id="KW-0472">Membrane</keyword>
<keyword id="KW-0732">Signal</keyword>
<keyword id="KW-0813">Transport</keyword>
<feature type="signal peptide" evidence="1">
    <location>
        <begin position="1"/>
        <end position="21"/>
    </location>
</feature>
<feature type="chain" id="PRO_1000184861" description="Multidrug resistance protein MdtA">
    <location>
        <begin position="22"/>
        <end position="415"/>
    </location>
</feature>
<feature type="region of interest" description="Disordered" evidence="2">
    <location>
        <begin position="32"/>
        <end position="60"/>
    </location>
</feature>
<feature type="region of interest" description="Disordered" evidence="2">
    <location>
        <begin position="392"/>
        <end position="415"/>
    </location>
</feature>
<feature type="compositionally biased region" description="Basic and acidic residues" evidence="2">
    <location>
        <begin position="399"/>
        <end position="415"/>
    </location>
</feature>
<comment type="function">
    <text evidence="1">The MdtABC tripartite complex confers resistance against novobiocin and deoxycholate.</text>
</comment>
<comment type="subunit">
    <text evidence="1">Part of a tripartite efflux system composed of MdtA, MdtB and MdtC.</text>
</comment>
<comment type="subcellular location">
    <subcellularLocation>
        <location evidence="1">Cell inner membrane</location>
        <topology evidence="1">Peripheral membrane protein</topology>
    </subcellularLocation>
</comment>
<comment type="induction">
    <text evidence="1">The mdtABC operon is transcriptionally activated by BaeR.</text>
</comment>
<comment type="similarity">
    <text evidence="1">Belongs to the membrane fusion protein (MFP) (TC 8.A.1) family.</text>
</comment>
<gene>
    <name evidence="1" type="primary">mdtA</name>
    <name type="ordered locus">ECED1_2420</name>
</gene>
<proteinExistence type="inferred from homology"/>
<reference key="1">
    <citation type="journal article" date="2009" name="PLoS Genet.">
        <title>Organised genome dynamics in the Escherichia coli species results in highly diverse adaptive paths.</title>
        <authorList>
            <person name="Touchon M."/>
            <person name="Hoede C."/>
            <person name="Tenaillon O."/>
            <person name="Barbe V."/>
            <person name="Baeriswyl S."/>
            <person name="Bidet P."/>
            <person name="Bingen E."/>
            <person name="Bonacorsi S."/>
            <person name="Bouchier C."/>
            <person name="Bouvet O."/>
            <person name="Calteau A."/>
            <person name="Chiapello H."/>
            <person name="Clermont O."/>
            <person name="Cruveiller S."/>
            <person name="Danchin A."/>
            <person name="Diard M."/>
            <person name="Dossat C."/>
            <person name="Karoui M.E."/>
            <person name="Frapy E."/>
            <person name="Garry L."/>
            <person name="Ghigo J.M."/>
            <person name="Gilles A.M."/>
            <person name="Johnson J."/>
            <person name="Le Bouguenec C."/>
            <person name="Lescat M."/>
            <person name="Mangenot S."/>
            <person name="Martinez-Jehanne V."/>
            <person name="Matic I."/>
            <person name="Nassif X."/>
            <person name="Oztas S."/>
            <person name="Petit M.A."/>
            <person name="Pichon C."/>
            <person name="Rouy Z."/>
            <person name="Ruf C.S."/>
            <person name="Schneider D."/>
            <person name="Tourret J."/>
            <person name="Vacherie B."/>
            <person name="Vallenet D."/>
            <person name="Medigue C."/>
            <person name="Rocha E.P.C."/>
            <person name="Denamur E."/>
        </authorList>
    </citation>
    <scope>NUCLEOTIDE SEQUENCE [LARGE SCALE GENOMIC DNA]</scope>
    <source>
        <strain>ED1a</strain>
    </source>
</reference>
<accession>B7MWY7</accession>
<sequence length="415" mass="44512">MKGSYKSRWVIVIVVVIAAIAAFWFWQGRNDSRSAAPGATKQAQQSPASGRRGMRSGPLAPVQAATAVEQAVPRYLTGLGTITAANTVTVRSRVDGQLMALHFQEGQQVKAGDLLAEIDPSQFKVALAQAQGQLAKDKATLANARRDLARYQQLAKTNLVSRQELDAQQALVSETEGTIKADEASVASAQLQLDWSRITAPVDGRVGLKQVDVGNQISSGDTTGIVVITQTHPIDLVFTLPESDIATVVQAQKAGKPLVVEAWDRTNSKKLSEGTLLSLDNQIDATTGTIKVKARFNNQDDALFPNQFVNARMLVDTEQNAVVIPTAALQMGNEGHFVWVLNSENKVSKHLVTPGIQDSQKVVIRAGISAGDRVVTDGIDRLTEGAKVEVVEAQSATTPEEKATSREYAKKGARS</sequence>
<organism>
    <name type="scientific">Escherichia coli O81 (strain ED1a)</name>
    <dbReference type="NCBI Taxonomy" id="585397"/>
    <lineage>
        <taxon>Bacteria</taxon>
        <taxon>Pseudomonadati</taxon>
        <taxon>Pseudomonadota</taxon>
        <taxon>Gammaproteobacteria</taxon>
        <taxon>Enterobacterales</taxon>
        <taxon>Enterobacteriaceae</taxon>
        <taxon>Escherichia</taxon>
    </lineage>
</organism>